<dbReference type="EMBL" id="CR543861">
    <property type="protein sequence ID" value="CAG69191.1"/>
    <property type="status" value="ALT_INIT"/>
    <property type="molecule type" value="Genomic_DNA"/>
</dbReference>
<dbReference type="RefSeq" id="WP_004928334.1">
    <property type="nucleotide sequence ID" value="NC_005966.1"/>
</dbReference>
<dbReference type="SMR" id="Q6F9S2"/>
<dbReference type="STRING" id="202950.GCA_001485005_01575"/>
<dbReference type="GeneID" id="45234727"/>
<dbReference type="KEGG" id="aci:ACIAD2418"/>
<dbReference type="eggNOG" id="COG0216">
    <property type="taxonomic scope" value="Bacteria"/>
</dbReference>
<dbReference type="HOGENOM" id="CLU_036856_0_1_6"/>
<dbReference type="OrthoDB" id="9806673at2"/>
<dbReference type="BioCyc" id="ASP62977:ACIAD_RS11050-MONOMER"/>
<dbReference type="Proteomes" id="UP000000430">
    <property type="component" value="Chromosome"/>
</dbReference>
<dbReference type="GO" id="GO:0005737">
    <property type="term" value="C:cytoplasm"/>
    <property type="evidence" value="ECO:0007669"/>
    <property type="project" value="UniProtKB-SubCell"/>
</dbReference>
<dbReference type="GO" id="GO:0016149">
    <property type="term" value="F:translation release factor activity, codon specific"/>
    <property type="evidence" value="ECO:0007669"/>
    <property type="project" value="UniProtKB-UniRule"/>
</dbReference>
<dbReference type="FunFam" id="3.30.160.20:FF:000004">
    <property type="entry name" value="Peptide chain release factor 1"/>
    <property type="match status" value="1"/>
</dbReference>
<dbReference type="FunFam" id="3.30.70.1660:FF:000002">
    <property type="entry name" value="Peptide chain release factor 1"/>
    <property type="match status" value="1"/>
</dbReference>
<dbReference type="FunFam" id="3.30.70.1660:FF:000004">
    <property type="entry name" value="Peptide chain release factor 1"/>
    <property type="match status" value="1"/>
</dbReference>
<dbReference type="Gene3D" id="3.30.160.20">
    <property type="match status" value="1"/>
</dbReference>
<dbReference type="Gene3D" id="3.30.70.1660">
    <property type="match status" value="1"/>
</dbReference>
<dbReference type="Gene3D" id="6.10.140.1950">
    <property type="match status" value="1"/>
</dbReference>
<dbReference type="HAMAP" id="MF_00093">
    <property type="entry name" value="Rel_fac_1"/>
    <property type="match status" value="1"/>
</dbReference>
<dbReference type="InterPro" id="IPR005139">
    <property type="entry name" value="PCRF"/>
</dbReference>
<dbReference type="InterPro" id="IPR000352">
    <property type="entry name" value="Pep_chain_release_fac_I"/>
</dbReference>
<dbReference type="InterPro" id="IPR045853">
    <property type="entry name" value="Pep_chain_release_fac_I_sf"/>
</dbReference>
<dbReference type="InterPro" id="IPR050057">
    <property type="entry name" value="Prokaryotic/Mito_RF"/>
</dbReference>
<dbReference type="InterPro" id="IPR004373">
    <property type="entry name" value="RF-1"/>
</dbReference>
<dbReference type="NCBIfam" id="TIGR00019">
    <property type="entry name" value="prfA"/>
    <property type="match status" value="1"/>
</dbReference>
<dbReference type="NCBIfam" id="NF001859">
    <property type="entry name" value="PRK00591.1"/>
    <property type="match status" value="1"/>
</dbReference>
<dbReference type="PANTHER" id="PTHR43804">
    <property type="entry name" value="LD18447P"/>
    <property type="match status" value="1"/>
</dbReference>
<dbReference type="PANTHER" id="PTHR43804:SF7">
    <property type="entry name" value="LD18447P"/>
    <property type="match status" value="1"/>
</dbReference>
<dbReference type="Pfam" id="PF03462">
    <property type="entry name" value="PCRF"/>
    <property type="match status" value="1"/>
</dbReference>
<dbReference type="Pfam" id="PF00472">
    <property type="entry name" value="RF-1"/>
    <property type="match status" value="1"/>
</dbReference>
<dbReference type="SMART" id="SM00937">
    <property type="entry name" value="PCRF"/>
    <property type="match status" value="1"/>
</dbReference>
<dbReference type="SUPFAM" id="SSF75620">
    <property type="entry name" value="Release factor"/>
    <property type="match status" value="1"/>
</dbReference>
<dbReference type="PROSITE" id="PS00745">
    <property type="entry name" value="RF_PROK_I"/>
    <property type="match status" value="1"/>
</dbReference>
<organism>
    <name type="scientific">Acinetobacter baylyi (strain ATCC 33305 / BD413 / ADP1)</name>
    <dbReference type="NCBI Taxonomy" id="62977"/>
    <lineage>
        <taxon>Bacteria</taxon>
        <taxon>Pseudomonadati</taxon>
        <taxon>Pseudomonadota</taxon>
        <taxon>Gammaproteobacteria</taxon>
        <taxon>Moraxellales</taxon>
        <taxon>Moraxellaceae</taxon>
        <taxon>Acinetobacter</taxon>
    </lineage>
</organism>
<reference key="1">
    <citation type="journal article" date="2004" name="Nucleic Acids Res.">
        <title>Unique features revealed by the genome sequence of Acinetobacter sp. ADP1, a versatile and naturally transformation competent bacterium.</title>
        <authorList>
            <person name="Barbe V."/>
            <person name="Vallenet D."/>
            <person name="Fonknechten N."/>
            <person name="Kreimeyer A."/>
            <person name="Oztas S."/>
            <person name="Labarre L."/>
            <person name="Cruveiller S."/>
            <person name="Robert C."/>
            <person name="Duprat S."/>
            <person name="Wincker P."/>
            <person name="Ornston L.N."/>
            <person name="Weissenbach J."/>
            <person name="Marliere P."/>
            <person name="Cohen G.N."/>
            <person name="Medigue C."/>
        </authorList>
    </citation>
    <scope>NUCLEOTIDE SEQUENCE [LARGE SCALE GENOMIC DNA]</scope>
    <source>
        <strain>ATCC 33305 / BD413 / ADP1</strain>
    </source>
</reference>
<accession>Q6F9S2</accession>
<gene>
    <name evidence="1" type="primary">prfA</name>
    <name type="ordered locus">ACIAD2418</name>
</gene>
<sequence>MKESLRLRLDQLCDRHEELTALLADAEVISDNKRFRKLSREHSDLNEIVDVWSKYRQAEEDIETAESMLSDPDFKDMAQEEIKENRALIEQLEGDLNILMIPKDPNDANAAYLEVRAGTGGDEAAIFSGDLFRMYSKYAESRGWRIEVLSENEGEHGGYKEVICRVDGDGVYGRLKFESGAHRVQRVPATESQGRVHTSACTVAILPEVDVDTTVEINPADLRIDTYRASGAGGQHINKTDSAVRITHVPTGVVVECQEERSQHKNKAKAMALLVSRLENAKRAAQETATSEMRRDLVGSGDRSERIRTYNYPQGRMTDHRINLTLYKLDAIMEGDLTELLDSLHREYQADQLAMLAQENGG</sequence>
<comment type="function">
    <text evidence="1">Peptide chain release factor 1 directs the termination of translation in response to the peptide chain termination codons UAG and UAA.</text>
</comment>
<comment type="subcellular location">
    <subcellularLocation>
        <location evidence="1">Cytoplasm</location>
    </subcellularLocation>
</comment>
<comment type="PTM">
    <text evidence="1">Methylated by PrmC. Methylation increases the termination efficiency of RF1.</text>
</comment>
<comment type="similarity">
    <text evidence="1">Belongs to the prokaryotic/mitochondrial release factor family.</text>
</comment>
<comment type="sequence caution" evidence="2">
    <conflict type="erroneous initiation">
        <sequence resource="EMBL-CDS" id="CAG69191"/>
    </conflict>
</comment>
<name>RF1_ACIAD</name>
<proteinExistence type="inferred from homology"/>
<evidence type="ECO:0000255" key="1">
    <source>
        <dbReference type="HAMAP-Rule" id="MF_00093"/>
    </source>
</evidence>
<evidence type="ECO:0000305" key="2"/>
<keyword id="KW-0963">Cytoplasm</keyword>
<keyword id="KW-0488">Methylation</keyword>
<keyword id="KW-0648">Protein biosynthesis</keyword>
<protein>
    <recommendedName>
        <fullName evidence="1">Peptide chain release factor 1</fullName>
        <shortName evidence="1">RF-1</shortName>
    </recommendedName>
</protein>
<feature type="chain" id="PRO_0000177621" description="Peptide chain release factor 1">
    <location>
        <begin position="1"/>
        <end position="362"/>
    </location>
</feature>
<feature type="modified residue" description="N5-methylglutamine" evidence="1">
    <location>
        <position position="235"/>
    </location>
</feature>